<gene>
    <name type="primary">rpl23</name>
</gene>
<keyword id="KW-0150">Chloroplast</keyword>
<keyword id="KW-0934">Plastid</keyword>
<keyword id="KW-0687">Ribonucleoprotein</keyword>
<keyword id="KW-0689">Ribosomal protein</keyword>
<keyword id="KW-0694">RNA-binding</keyword>
<keyword id="KW-0699">rRNA-binding</keyword>
<dbReference type="EMBL" id="AF494278">
    <property type="protein sequence ID" value="AAM96560.1"/>
    <property type="molecule type" value="Genomic_DNA"/>
</dbReference>
<dbReference type="RefSeq" id="NP_683844.1">
    <property type="nucleotide sequence ID" value="NC_004115.1"/>
</dbReference>
<dbReference type="SMR" id="Q8M9U6"/>
<dbReference type="GeneID" id="860716"/>
<dbReference type="GO" id="GO:0009507">
    <property type="term" value="C:chloroplast"/>
    <property type="evidence" value="ECO:0007669"/>
    <property type="project" value="UniProtKB-SubCell"/>
</dbReference>
<dbReference type="GO" id="GO:1990904">
    <property type="term" value="C:ribonucleoprotein complex"/>
    <property type="evidence" value="ECO:0007669"/>
    <property type="project" value="UniProtKB-KW"/>
</dbReference>
<dbReference type="GO" id="GO:0005840">
    <property type="term" value="C:ribosome"/>
    <property type="evidence" value="ECO:0007669"/>
    <property type="project" value="UniProtKB-KW"/>
</dbReference>
<dbReference type="GO" id="GO:0019843">
    <property type="term" value="F:rRNA binding"/>
    <property type="evidence" value="ECO:0007669"/>
    <property type="project" value="UniProtKB-UniRule"/>
</dbReference>
<dbReference type="GO" id="GO:0003735">
    <property type="term" value="F:structural constituent of ribosome"/>
    <property type="evidence" value="ECO:0007669"/>
    <property type="project" value="InterPro"/>
</dbReference>
<dbReference type="GO" id="GO:0006412">
    <property type="term" value="P:translation"/>
    <property type="evidence" value="ECO:0007669"/>
    <property type="project" value="UniProtKB-UniRule"/>
</dbReference>
<dbReference type="Gene3D" id="3.30.70.330">
    <property type="match status" value="1"/>
</dbReference>
<dbReference type="HAMAP" id="MF_01369_B">
    <property type="entry name" value="Ribosomal_uL23_B"/>
    <property type="match status" value="1"/>
</dbReference>
<dbReference type="InterPro" id="IPR012677">
    <property type="entry name" value="Nucleotide-bd_a/b_plait_sf"/>
</dbReference>
<dbReference type="InterPro" id="IPR013025">
    <property type="entry name" value="Ribosomal_uL23-like"/>
</dbReference>
<dbReference type="InterPro" id="IPR012678">
    <property type="entry name" value="Ribosomal_uL23/eL15/eS24_sf"/>
</dbReference>
<dbReference type="NCBIfam" id="NF004363">
    <property type="entry name" value="PRK05738.2-4"/>
    <property type="match status" value="1"/>
</dbReference>
<dbReference type="PANTHER" id="PTHR11620">
    <property type="entry name" value="60S RIBOSOMAL PROTEIN L23A"/>
    <property type="match status" value="1"/>
</dbReference>
<dbReference type="Pfam" id="PF00276">
    <property type="entry name" value="Ribosomal_L23"/>
    <property type="match status" value="1"/>
</dbReference>
<dbReference type="SUPFAM" id="SSF54189">
    <property type="entry name" value="Ribosomal proteins S24e, L23 and L15e"/>
    <property type="match status" value="1"/>
</dbReference>
<geneLocation type="chloroplast"/>
<comment type="function">
    <text evidence="1">Binds to 23S rRNA.</text>
</comment>
<comment type="subunit">
    <text evidence="1">Part of the 50S ribosomal subunit.</text>
</comment>
<comment type="subcellular location">
    <subcellularLocation>
        <location>Plastid</location>
        <location>Chloroplast</location>
    </subcellularLocation>
</comment>
<comment type="similarity">
    <text evidence="2">Belongs to the universal ribosomal protein uL23 family.</text>
</comment>
<proteinExistence type="inferred from homology"/>
<name>RK23_CHAGL</name>
<sequence>MIDKVKSPLLTEKSIRLLQKNQYTFQVNSDVNKTEFKKWIEIFFKVKVMSINSCRPPRKKKRIGLISGYTVRYKKIIVTLKSGDSIPLFSI</sequence>
<feature type="chain" id="PRO_0000272890" description="Large ribosomal subunit protein uL23c">
    <location>
        <begin position="1"/>
        <end position="91"/>
    </location>
</feature>
<evidence type="ECO:0000250" key="1"/>
<evidence type="ECO:0000305" key="2"/>
<protein>
    <recommendedName>
        <fullName evidence="2">Large ribosomal subunit protein uL23c</fullName>
    </recommendedName>
    <alternativeName>
        <fullName>50S ribosomal protein L23, chloroplastic</fullName>
    </alternativeName>
</protein>
<reference key="1">
    <citation type="journal article" date="2002" name="Proc. Natl. Acad. Sci. U.S.A.">
        <title>The chloroplast and mitochondrial genome sequences of the charophyte Chaetosphaeridium globosum: insights into the timing of the events that restructured organelle DNAs within the green algal lineage that led to land plants.</title>
        <authorList>
            <person name="Turmel M."/>
            <person name="Otis C."/>
            <person name="Lemieux C."/>
        </authorList>
    </citation>
    <scope>NUCLEOTIDE SEQUENCE [LARGE SCALE GENOMIC DNA]</scope>
    <source>
        <strain>M1311</strain>
    </source>
</reference>
<organism>
    <name type="scientific">Chaetosphaeridium globosum</name>
    <name type="common">Charophycean green alga</name>
    <name type="synonym">Herposteiron globosum</name>
    <dbReference type="NCBI Taxonomy" id="96477"/>
    <lineage>
        <taxon>Eukaryota</taxon>
        <taxon>Viridiplantae</taxon>
        <taxon>Streptophyta</taxon>
        <taxon>Coleochaetophyceae</taxon>
        <taxon>Coleochaetales</taxon>
        <taxon>Chaetosphaeridiaceae</taxon>
        <taxon>Chaetosphaeridium</taxon>
    </lineage>
</organism>
<accession>Q8M9U6</accession>